<name>CDII_YERPY</name>
<proteinExistence type="evidence at protein level"/>
<comment type="function">
    <text evidence="1">Immunity protein component of a toxin-immunity protein module, which functions as a cellular contact-dependent growth inhibition (CDI) system. CDI modules allow bacteria to communicate with and inhibit the growth of closely related neighboring bacteria in a contact-dependent fashion. Neutralizes the toxic activity of cognate toxin CdiA-YPIII (residues 954-1077). Does not inhibit toxic activity of CdiA from other toxin-immunity modules.</text>
</comment>
<comment type="subunit">
    <text evidence="1">Interacts with the C-terminal DNase fragment (residues 954-1077) of cognate toxin CdiA-YPIII.</text>
</comment>
<comment type="miscellaneous">
    <text evidence="3">Encoded in a defective cdi locus that has been inactivated by gene rearragements and deletions.</text>
</comment>
<organism>
    <name type="scientific">Yersinia pseudotuberculosis serotype O:3 (strain YPIII)</name>
    <dbReference type="NCBI Taxonomy" id="502800"/>
    <lineage>
        <taxon>Bacteria</taxon>
        <taxon>Pseudomonadati</taxon>
        <taxon>Pseudomonadota</taxon>
        <taxon>Gammaproteobacteria</taxon>
        <taxon>Enterobacterales</taxon>
        <taxon>Yersiniaceae</taxon>
        <taxon>Yersinia</taxon>
    </lineage>
</organism>
<feature type="chain" id="PRO_0000446874" description="Immunity protein CdiI-YPIII">
    <location>
        <begin position="1"/>
        <end position="177"/>
    </location>
</feature>
<feature type="strand" evidence="5">
    <location>
        <begin position="8"/>
        <end position="14"/>
    </location>
</feature>
<feature type="strand" evidence="5">
    <location>
        <begin position="19"/>
        <end position="32"/>
    </location>
</feature>
<feature type="strand" evidence="5">
    <location>
        <begin position="38"/>
        <end position="41"/>
    </location>
</feature>
<feature type="helix" evidence="5">
    <location>
        <begin position="47"/>
        <end position="59"/>
    </location>
</feature>
<feature type="strand" evidence="5">
    <location>
        <begin position="63"/>
        <end position="67"/>
    </location>
</feature>
<feature type="strand" evidence="5">
    <location>
        <begin position="70"/>
        <end position="72"/>
    </location>
</feature>
<feature type="helix" evidence="5">
    <location>
        <begin position="82"/>
        <end position="85"/>
    </location>
</feature>
<feature type="helix" evidence="5">
    <location>
        <begin position="87"/>
        <end position="105"/>
    </location>
</feature>
<feature type="helix" evidence="5">
    <location>
        <begin position="110"/>
        <end position="115"/>
    </location>
</feature>
<feature type="strand" evidence="5">
    <location>
        <begin position="118"/>
        <end position="124"/>
    </location>
</feature>
<feature type="strand" evidence="5">
    <location>
        <begin position="129"/>
        <end position="133"/>
    </location>
</feature>
<feature type="strand" evidence="5">
    <location>
        <begin position="135"/>
        <end position="138"/>
    </location>
</feature>
<feature type="strand" evidence="5">
    <location>
        <begin position="141"/>
        <end position="143"/>
    </location>
</feature>
<feature type="strand" evidence="5">
    <location>
        <begin position="146"/>
        <end position="149"/>
    </location>
</feature>
<feature type="strand" evidence="5">
    <location>
        <begin position="153"/>
        <end position="155"/>
    </location>
</feature>
<feature type="helix" evidence="5">
    <location>
        <begin position="161"/>
        <end position="172"/>
    </location>
</feature>
<accession>A0A0R4I987</accession>
<accession>A0A0H3B164</accession>
<protein>
    <recommendedName>
        <fullName evidence="2">Immunity protein CdiI-YPIII</fullName>
        <shortName>CdiI-YPIII</shortName>
    </recommendedName>
</protein>
<keyword id="KW-0002">3D-structure</keyword>
<sequence length="177" mass="19925">MNDIVKSAWASVKMNTDFICVDTYSGYRSNQLDPLGVQHLSSPDVSDLDLGEMVKDALSHSRFVLPAPRTDIWIHPEVTFDLDLYDSRRTVERYDEWVKKLMVHYGYKTKRALFKDMKSCDICCNHDAITISPTRHEKLEVWGGTGLKGSDNVILSVDSSPTEIGAGLRLALSRCKG</sequence>
<reference key="1">
    <citation type="submission" date="2008-02" db="EMBL/GenBank/DDBJ databases">
        <title>Complete sequence of Yersinia pseudotuberculosis YPIII.</title>
        <authorList>
            <consortium name="US DOE Joint Genome Institute"/>
            <person name="Copeland A."/>
            <person name="Lucas S."/>
            <person name="Lapidus A."/>
            <person name="Glavina del Rio T."/>
            <person name="Dalin E."/>
            <person name="Tice H."/>
            <person name="Bruce D."/>
            <person name="Goodwin L."/>
            <person name="Pitluck S."/>
            <person name="Munk A.C."/>
            <person name="Brettin T."/>
            <person name="Detter J.C."/>
            <person name="Han C."/>
            <person name="Tapia R."/>
            <person name="Schmutz J."/>
            <person name="Larimer F."/>
            <person name="Land M."/>
            <person name="Hauser L."/>
            <person name="Challacombe J.F."/>
            <person name="Green L."/>
            <person name="Lindler L.E."/>
            <person name="Nikolich M.P."/>
            <person name="Richardson P."/>
        </authorList>
    </citation>
    <scope>NUCLEOTIDE SEQUENCE [LARGE SCALE GENOMIC DNA]</scope>
    <source>
        <strain>YPIII</strain>
    </source>
</reference>
<reference evidence="4" key="2">
    <citation type="journal article" date="2015" name="J. Mol. Biol.">
        <title>Diversification of beta-augmentation interactions between CDI toxin/immunity proteins.</title>
        <authorList>
            <person name="Morse R.P."/>
            <person name="Willett J.L."/>
            <person name="Johnson P.M."/>
            <person name="Zheng J."/>
            <person name="Credali A."/>
            <person name="Iniguez A."/>
            <person name="Nowick J.S."/>
            <person name="Hayes C.S."/>
            <person name="Goulding C.W."/>
        </authorList>
    </citation>
    <scope>X-RAY CRYSTALLOGRAPHY (2.09 ANGSTROMS) IN COMPLEX WITH CDIA</scope>
    <scope>FUNCTION</scope>
    <scope>SUBUNIT</scope>
    <source>
        <strain>YPIII</strain>
    </source>
</reference>
<dbReference type="EMBL" id="CP000950">
    <property type="protein sequence ID" value="ACA66879.1"/>
    <property type="molecule type" value="Genomic_DNA"/>
</dbReference>
<dbReference type="RefSeq" id="WP_012303509.1">
    <property type="nucleotide sequence ID" value="NZ_CP009792.1"/>
</dbReference>
<dbReference type="PDB" id="4ZQU">
    <property type="method" value="X-ray"/>
    <property type="resolution" value="2.09 A"/>
    <property type="chains" value="B=1-177"/>
</dbReference>
<dbReference type="PDBsum" id="4ZQU"/>
<dbReference type="SMR" id="A0A0R4I987"/>
<dbReference type="KEGG" id="ypy:YPK_0576"/>
<dbReference type="PATRIC" id="fig|502800.11.peg.1189"/>
<dbReference type="EvolutionaryTrace" id="A0A0R4I987"/>
<dbReference type="CDD" id="cd13445">
    <property type="entry name" value="CDI_inhibitor_EC869_like"/>
    <property type="match status" value="1"/>
</dbReference>
<dbReference type="Gene3D" id="3.40.1590.10">
    <property type="entry name" value="NMB0488-like"/>
    <property type="match status" value="1"/>
</dbReference>
<dbReference type="InterPro" id="IPR009888">
    <property type="entry name" value="CdiI_Proteobact"/>
</dbReference>
<dbReference type="InterPro" id="IPR037891">
    <property type="entry name" value="Cdil-like_sf"/>
</dbReference>
<dbReference type="Pfam" id="PF07262">
    <property type="entry name" value="CdiI"/>
    <property type="match status" value="1"/>
</dbReference>
<dbReference type="SUPFAM" id="SSF160207">
    <property type="entry name" value="NMB0488-like"/>
    <property type="match status" value="1"/>
</dbReference>
<gene>
    <name evidence="2" type="primary">cdiI</name>
    <name type="ordered locus">YPK_0576</name>
</gene>
<evidence type="ECO:0000269" key="1">
    <source>
    </source>
</evidence>
<evidence type="ECO:0000303" key="2">
    <source>
    </source>
</evidence>
<evidence type="ECO:0000305" key="3">
    <source>
    </source>
</evidence>
<evidence type="ECO:0007744" key="4">
    <source>
        <dbReference type="PDB" id="4ZQU"/>
    </source>
</evidence>
<evidence type="ECO:0007829" key="5">
    <source>
        <dbReference type="PDB" id="4ZQU"/>
    </source>
</evidence>